<proteinExistence type="inferred from homology"/>
<reference key="1">
    <citation type="journal article" date="2002" name="Proc. Natl. Acad. Sci. U.S.A.">
        <title>Complete genome sequence of Clostridium perfringens, an anaerobic flesh-eater.</title>
        <authorList>
            <person name="Shimizu T."/>
            <person name="Ohtani K."/>
            <person name="Hirakawa H."/>
            <person name="Ohshima K."/>
            <person name="Yamashita A."/>
            <person name="Shiba T."/>
            <person name="Ogasawara N."/>
            <person name="Hattori M."/>
            <person name="Kuhara S."/>
            <person name="Hayashi H."/>
        </authorList>
    </citation>
    <scope>NUCLEOTIDE SEQUENCE [LARGE SCALE GENOMIC DNA]</scope>
    <source>
        <strain>13 / Type A</strain>
    </source>
</reference>
<protein>
    <recommendedName>
        <fullName evidence="1">Large ribosomal subunit protein bL33</fullName>
    </recommendedName>
    <alternativeName>
        <fullName evidence="2">50S ribosomal protein L33</fullName>
    </alternativeName>
</protein>
<dbReference type="EMBL" id="BA000016">
    <property type="protein sequence ID" value="BAB82126.1"/>
    <property type="molecule type" value="Genomic_DNA"/>
</dbReference>
<dbReference type="RefSeq" id="WP_003482374.1">
    <property type="nucleotide sequence ID" value="NC_003366.1"/>
</dbReference>
<dbReference type="SMR" id="Q8XHR1"/>
<dbReference type="STRING" id="195102.gene:10491737"/>
<dbReference type="GeneID" id="93000994"/>
<dbReference type="KEGG" id="cpe:CPE2420"/>
<dbReference type="HOGENOM" id="CLU_190949_0_2_9"/>
<dbReference type="Proteomes" id="UP000000818">
    <property type="component" value="Chromosome"/>
</dbReference>
<dbReference type="GO" id="GO:0005737">
    <property type="term" value="C:cytoplasm"/>
    <property type="evidence" value="ECO:0007669"/>
    <property type="project" value="UniProtKB-ARBA"/>
</dbReference>
<dbReference type="GO" id="GO:1990904">
    <property type="term" value="C:ribonucleoprotein complex"/>
    <property type="evidence" value="ECO:0007669"/>
    <property type="project" value="UniProtKB-KW"/>
</dbReference>
<dbReference type="GO" id="GO:0005840">
    <property type="term" value="C:ribosome"/>
    <property type="evidence" value="ECO:0007669"/>
    <property type="project" value="UniProtKB-KW"/>
</dbReference>
<dbReference type="GO" id="GO:0003735">
    <property type="term" value="F:structural constituent of ribosome"/>
    <property type="evidence" value="ECO:0007669"/>
    <property type="project" value="InterPro"/>
</dbReference>
<dbReference type="GO" id="GO:0006412">
    <property type="term" value="P:translation"/>
    <property type="evidence" value="ECO:0007669"/>
    <property type="project" value="UniProtKB-UniRule"/>
</dbReference>
<dbReference type="Gene3D" id="2.20.28.120">
    <property type="entry name" value="Ribosomal protein L33"/>
    <property type="match status" value="1"/>
</dbReference>
<dbReference type="HAMAP" id="MF_00294">
    <property type="entry name" value="Ribosomal_bL33"/>
    <property type="match status" value="1"/>
</dbReference>
<dbReference type="InterPro" id="IPR001705">
    <property type="entry name" value="Ribosomal_bL33"/>
</dbReference>
<dbReference type="InterPro" id="IPR018264">
    <property type="entry name" value="Ribosomal_bL33_CS"/>
</dbReference>
<dbReference type="InterPro" id="IPR038584">
    <property type="entry name" value="Ribosomal_bL33_sf"/>
</dbReference>
<dbReference type="InterPro" id="IPR011332">
    <property type="entry name" value="Ribosomal_zn-bd"/>
</dbReference>
<dbReference type="NCBIfam" id="NF001764">
    <property type="entry name" value="PRK00504.1"/>
    <property type="match status" value="1"/>
</dbReference>
<dbReference type="NCBIfam" id="NF001860">
    <property type="entry name" value="PRK00595.1"/>
    <property type="match status" value="1"/>
</dbReference>
<dbReference type="NCBIfam" id="TIGR01023">
    <property type="entry name" value="rpmG_bact"/>
    <property type="match status" value="1"/>
</dbReference>
<dbReference type="PANTHER" id="PTHR43168">
    <property type="entry name" value="50S RIBOSOMAL PROTEIN L33, CHLOROPLASTIC"/>
    <property type="match status" value="1"/>
</dbReference>
<dbReference type="PANTHER" id="PTHR43168:SF2">
    <property type="entry name" value="LARGE RIBOSOMAL SUBUNIT PROTEIN BL33C"/>
    <property type="match status" value="1"/>
</dbReference>
<dbReference type="Pfam" id="PF00471">
    <property type="entry name" value="Ribosomal_L33"/>
    <property type="match status" value="1"/>
</dbReference>
<dbReference type="SUPFAM" id="SSF57829">
    <property type="entry name" value="Zn-binding ribosomal proteins"/>
    <property type="match status" value="1"/>
</dbReference>
<dbReference type="PROSITE" id="PS00582">
    <property type="entry name" value="RIBOSOMAL_L33"/>
    <property type="match status" value="1"/>
</dbReference>
<evidence type="ECO:0000255" key="1">
    <source>
        <dbReference type="HAMAP-Rule" id="MF_00294"/>
    </source>
</evidence>
<evidence type="ECO:0000305" key="2"/>
<organism>
    <name type="scientific">Clostridium perfringens (strain 13 / Type A)</name>
    <dbReference type="NCBI Taxonomy" id="195102"/>
    <lineage>
        <taxon>Bacteria</taxon>
        <taxon>Bacillati</taxon>
        <taxon>Bacillota</taxon>
        <taxon>Clostridia</taxon>
        <taxon>Eubacteriales</taxon>
        <taxon>Clostridiaceae</taxon>
        <taxon>Clostridium</taxon>
    </lineage>
</organism>
<keyword id="KW-1185">Reference proteome</keyword>
<keyword id="KW-0687">Ribonucleoprotein</keyword>
<keyword id="KW-0689">Ribosomal protein</keyword>
<name>RL33_CLOPE</name>
<comment type="similarity">
    <text evidence="1">Belongs to the bacterial ribosomal protein bL33 family.</text>
</comment>
<accession>Q8XHR1</accession>
<gene>
    <name evidence="1" type="primary">rpmG</name>
    <name type="ordered locus">CPE2420</name>
</gene>
<feature type="chain" id="PRO_0000170155" description="Large ribosomal subunit protein bL33">
    <location>
        <begin position="1"/>
        <end position="49"/>
    </location>
</feature>
<sequence>MRVKVTLACTECKQRNYNTMKNKKNDPNRIEMKKYCKFCKTHTLHRETK</sequence>